<sequence>MERTVTVVPEDGLHARPASKFVETANKFDADVQLGRADEDDLVPAASMLAVTGLGVGHDESVRLVAEGDDAEAALDALEDILSTPEAKQ</sequence>
<evidence type="ECO:0000250" key="1"/>
<evidence type="ECO:0000255" key="2">
    <source>
        <dbReference type="PROSITE-ProRule" id="PRU00681"/>
    </source>
</evidence>
<evidence type="ECO:0000269" key="3">
    <source>
    </source>
</evidence>
<evidence type="ECO:0000305" key="4"/>
<reference key="1">
    <citation type="journal article" date="2010" name="PLoS ONE">
        <title>The complete genome sequence of Haloferax volcanii DS2, a model archaeon.</title>
        <authorList>
            <person name="Hartman A.L."/>
            <person name="Norais C."/>
            <person name="Badger J.H."/>
            <person name="Delmas S."/>
            <person name="Haldenby S."/>
            <person name="Madupu R."/>
            <person name="Robinson J."/>
            <person name="Khouri H."/>
            <person name="Ren Q."/>
            <person name="Lowe T.M."/>
            <person name="Maupin-Furlow J."/>
            <person name="Pohlschroder M."/>
            <person name="Daniels C."/>
            <person name="Pfeiffer F."/>
            <person name="Allers T."/>
            <person name="Eisen J.A."/>
        </authorList>
    </citation>
    <scope>NUCLEOTIDE SEQUENCE [LARGE SCALE GENOMIC DNA]</scope>
    <source>
        <strain>ATCC 29605 / DSM 3757 / JCM 8879 / NBRC 14742 / NCIMB 2012 / VKM B-1768 / DS2</strain>
    </source>
</reference>
<reference key="2">
    <citation type="journal article" date="2014" name="PLoS Genet.">
        <title>Phylogenetically driven sequencing of extremely halophilic archaea reveals strategies for static and dynamic osmo-response.</title>
        <authorList>
            <person name="Becker E.A."/>
            <person name="Seitzer P.M."/>
            <person name="Tritt A."/>
            <person name="Larsen D."/>
            <person name="Krusor M."/>
            <person name="Yao A.I."/>
            <person name="Wu D."/>
            <person name="Madern D."/>
            <person name="Eisen J.A."/>
            <person name="Darling A.E."/>
            <person name="Facciotti M.T."/>
        </authorList>
    </citation>
    <scope>NUCLEOTIDE SEQUENCE [LARGE SCALE GENOMIC DNA]</scope>
    <source>
        <strain>ATCC 29605 / DSM 3757 / JCM 8879 / NBRC 14742 / NCIMB 2012 / VKM B-1768 / DS2</strain>
    </source>
</reference>
<reference key="3">
    <citation type="journal article" date="2012" name="J. Bacteriol.">
        <title>Fructose degradation in the haloarchaeon Haloferax volcanii involves a bacterial type phosphoenolpyruvate-dependent phosphotransferase system, fructose-1-phosphate kinase, and class II fructose-1,6-bisphosphate aldolase.</title>
        <authorList>
            <person name="Pickl A."/>
            <person name="Johnsen U."/>
            <person name="Schoenheit P."/>
        </authorList>
    </citation>
    <scope>IDENTIFICATION</scope>
    <scope>FUNCTION</scope>
    <scope>INDUCTION</scope>
    <source>
        <strain>DS2 / DS70</strain>
    </source>
</reference>
<organism>
    <name type="scientific">Haloferax volcanii (strain ATCC 29605 / DSM 3757 / JCM 8879 / NBRC 14742 / NCIMB 2012 / VKM B-1768 / DS2)</name>
    <name type="common">Halobacterium volcanii</name>
    <dbReference type="NCBI Taxonomy" id="309800"/>
    <lineage>
        <taxon>Archaea</taxon>
        <taxon>Methanobacteriati</taxon>
        <taxon>Methanobacteriota</taxon>
        <taxon>Stenosarchaea group</taxon>
        <taxon>Halobacteria</taxon>
        <taxon>Halobacteriales</taxon>
        <taxon>Haloferacaceae</taxon>
        <taxon>Haloferax</taxon>
    </lineage>
</organism>
<feature type="chain" id="PRO_0000428986" description="Phosphocarrier protein HPr">
    <location>
        <begin position="1"/>
        <end position="89"/>
    </location>
</feature>
<feature type="domain" description="HPr" evidence="2">
    <location>
        <begin position="1"/>
        <end position="89"/>
    </location>
</feature>
<feature type="active site" description="Pros-phosphohistidine intermediate" evidence="2">
    <location>
        <position position="14"/>
    </location>
</feature>
<feature type="modified residue" description="Phosphoserine; by HPrK/P" evidence="2">
    <location>
        <position position="47"/>
    </location>
</feature>
<dbReference type="EMBL" id="CP001956">
    <property type="protein sequence ID" value="ADE03675.1"/>
    <property type="molecule type" value="Genomic_DNA"/>
</dbReference>
<dbReference type="EMBL" id="AOHU01000090">
    <property type="protein sequence ID" value="ELY28265.1"/>
    <property type="molecule type" value="Genomic_DNA"/>
</dbReference>
<dbReference type="RefSeq" id="WP_004043438.1">
    <property type="nucleotide sequence ID" value="NC_013967.1"/>
</dbReference>
<dbReference type="SMR" id="D4GYE3"/>
<dbReference type="STRING" id="309800.HVO_1497"/>
<dbReference type="TCDB" id="8.A.8.1.4">
    <property type="family name" value="the phosphotransferase system hpr (hpr) family"/>
</dbReference>
<dbReference type="PaxDb" id="309800-C498_11246"/>
<dbReference type="EnsemblBacteria" id="ADE03675">
    <property type="protein sequence ID" value="ADE03675"/>
    <property type="gene ID" value="HVO_1497"/>
</dbReference>
<dbReference type="GeneID" id="8925514"/>
<dbReference type="KEGG" id="hvo:HVO_1497"/>
<dbReference type="PATRIC" id="fig|309800.29.peg.2143"/>
<dbReference type="eggNOG" id="arCOG04543">
    <property type="taxonomic scope" value="Archaea"/>
</dbReference>
<dbReference type="HOGENOM" id="CLU_136230_1_1_2"/>
<dbReference type="OrthoDB" id="307063at2157"/>
<dbReference type="Proteomes" id="UP000008243">
    <property type="component" value="Chromosome"/>
</dbReference>
<dbReference type="Proteomes" id="UP000011532">
    <property type="component" value="Unassembled WGS sequence"/>
</dbReference>
<dbReference type="GO" id="GO:0005737">
    <property type="term" value="C:cytoplasm"/>
    <property type="evidence" value="ECO:0007669"/>
    <property type="project" value="UniProtKB-SubCell"/>
</dbReference>
<dbReference type="GO" id="GO:0009401">
    <property type="term" value="P:phosphoenolpyruvate-dependent sugar phosphotransferase system"/>
    <property type="evidence" value="ECO:0007669"/>
    <property type="project" value="UniProtKB-KW"/>
</dbReference>
<dbReference type="CDD" id="cd00367">
    <property type="entry name" value="PTS-HPr_like"/>
    <property type="match status" value="1"/>
</dbReference>
<dbReference type="Gene3D" id="3.30.1340.10">
    <property type="entry name" value="HPr-like"/>
    <property type="match status" value="1"/>
</dbReference>
<dbReference type="InterPro" id="IPR050399">
    <property type="entry name" value="HPr"/>
</dbReference>
<dbReference type="InterPro" id="IPR000032">
    <property type="entry name" value="HPr-like"/>
</dbReference>
<dbReference type="InterPro" id="IPR035895">
    <property type="entry name" value="HPr-like_sf"/>
</dbReference>
<dbReference type="InterPro" id="IPR054908">
    <property type="entry name" value="PTS-HPr"/>
</dbReference>
<dbReference type="InterPro" id="IPR001020">
    <property type="entry name" value="PTS_HPr_His_P_site"/>
</dbReference>
<dbReference type="NCBIfam" id="NF041319">
    <property type="entry name" value="PTS-HPr_Halo"/>
    <property type="match status" value="1"/>
</dbReference>
<dbReference type="NCBIfam" id="TIGR01003">
    <property type="entry name" value="PTS_HPr_family"/>
    <property type="match status" value="1"/>
</dbReference>
<dbReference type="PANTHER" id="PTHR33705">
    <property type="entry name" value="PHOSPHOCARRIER PROTEIN HPR"/>
    <property type="match status" value="1"/>
</dbReference>
<dbReference type="PANTHER" id="PTHR33705:SF2">
    <property type="entry name" value="PHOSPHOCARRIER PROTEIN NPR"/>
    <property type="match status" value="1"/>
</dbReference>
<dbReference type="Pfam" id="PF00381">
    <property type="entry name" value="PTS-HPr"/>
    <property type="match status" value="1"/>
</dbReference>
<dbReference type="PRINTS" id="PR00107">
    <property type="entry name" value="PHOSPHOCPHPR"/>
</dbReference>
<dbReference type="SUPFAM" id="SSF55594">
    <property type="entry name" value="HPr-like"/>
    <property type="match status" value="1"/>
</dbReference>
<dbReference type="PROSITE" id="PS51350">
    <property type="entry name" value="PTS_HPR_DOM"/>
    <property type="match status" value="1"/>
</dbReference>
<dbReference type="PROSITE" id="PS00369">
    <property type="entry name" value="PTS_HPR_HIS"/>
    <property type="match status" value="1"/>
</dbReference>
<name>PTHP_HALVD</name>
<comment type="function">
    <text evidence="1 3">General (non sugar-specific) component of the phosphoenolpyruvate-dependent sugar phosphotransferase system (sugar PTS). This major carbohydrate active-transport system catalyzes the phosphorylation of incoming sugar substrates concomitantly with their translocation across the cell membrane. The phosphoryl group from phosphoenolpyruvate (PEP) is transferred to the phosphoryl carrier protein HPr by enzyme I. Phospho-HPr then transfers it to the PTS EIIA domain (By similarity). Is involved in fructose transport.</text>
</comment>
<comment type="activity regulation">
    <text evidence="1">Phosphorylation on Ser-47 inhibits the phosphoryl transfer from enzyme I to HPr.</text>
</comment>
<comment type="subcellular location">
    <subcellularLocation>
        <location evidence="1">Cytoplasm</location>
    </subcellularLocation>
</comment>
<comment type="induction">
    <text evidence="3">Expression is highly up-regulated in presence of fructose.</text>
</comment>
<comment type="miscellaneous">
    <text>PTS-type transport systems are very rare in archaea.</text>
</comment>
<comment type="similarity">
    <text evidence="4">Belongs to the HPr family.</text>
</comment>
<protein>
    <recommendedName>
        <fullName>Phosphocarrier protein HPr</fullName>
    </recommendedName>
</protein>
<accession>D4GYE3</accession>
<gene>
    <name type="primary">ptsH1</name>
    <name type="ordered locus">HVO_1497</name>
    <name type="ORF">C498_11246</name>
</gene>
<proteinExistence type="evidence at transcript level"/>
<keyword id="KW-0963">Cytoplasm</keyword>
<keyword id="KW-0597">Phosphoprotein</keyword>
<keyword id="KW-0598">Phosphotransferase system</keyword>
<keyword id="KW-1185">Reference proteome</keyword>
<keyword id="KW-0762">Sugar transport</keyword>
<keyword id="KW-0813">Transport</keyword>